<evidence type="ECO:0000255" key="1">
    <source>
        <dbReference type="HAMAP-Rule" id="MF_01365"/>
    </source>
</evidence>
<evidence type="ECO:0000305" key="2"/>
<accession>A2BMD5</accession>
<dbReference type="EMBL" id="CP000493">
    <property type="protein sequence ID" value="ABM81146.1"/>
    <property type="molecule type" value="Genomic_DNA"/>
</dbReference>
<dbReference type="RefSeq" id="WP_011822464.1">
    <property type="nucleotide sequence ID" value="NC_008818.1"/>
</dbReference>
<dbReference type="SMR" id="A2BMD5"/>
<dbReference type="STRING" id="415426.Hbut_1316"/>
<dbReference type="EnsemblBacteria" id="ABM81146">
    <property type="protein sequence ID" value="ABM81146"/>
    <property type="gene ID" value="Hbut_1316"/>
</dbReference>
<dbReference type="GeneID" id="4781632"/>
<dbReference type="KEGG" id="hbu:Hbut_1316"/>
<dbReference type="eggNOG" id="arCOG04090">
    <property type="taxonomic scope" value="Archaea"/>
</dbReference>
<dbReference type="HOGENOM" id="CLU_065464_0_0_2"/>
<dbReference type="OrthoDB" id="7144at2157"/>
<dbReference type="Proteomes" id="UP000002593">
    <property type="component" value="Chromosome"/>
</dbReference>
<dbReference type="GO" id="GO:0022625">
    <property type="term" value="C:cytosolic large ribosomal subunit"/>
    <property type="evidence" value="ECO:0007669"/>
    <property type="project" value="TreeGrafter"/>
</dbReference>
<dbReference type="GO" id="GO:0019843">
    <property type="term" value="F:rRNA binding"/>
    <property type="evidence" value="ECO:0007669"/>
    <property type="project" value="UniProtKB-UniRule"/>
</dbReference>
<dbReference type="GO" id="GO:0003735">
    <property type="term" value="F:structural constituent of ribosome"/>
    <property type="evidence" value="ECO:0007669"/>
    <property type="project" value="InterPro"/>
</dbReference>
<dbReference type="GO" id="GO:0002181">
    <property type="term" value="P:cytoplasmic translation"/>
    <property type="evidence" value="ECO:0007669"/>
    <property type="project" value="TreeGrafter"/>
</dbReference>
<dbReference type="FunFam" id="3.90.930.12:FF:000008">
    <property type="entry name" value="50S ribosomal protein L6"/>
    <property type="match status" value="1"/>
</dbReference>
<dbReference type="FunFam" id="3.90.930.12:FF:000004">
    <property type="entry name" value="60S ribosomal protein L9"/>
    <property type="match status" value="1"/>
</dbReference>
<dbReference type="Gene3D" id="3.90.930.12">
    <property type="entry name" value="Ribosomal protein L6, alpha-beta domain"/>
    <property type="match status" value="2"/>
</dbReference>
<dbReference type="HAMAP" id="MF_01365_A">
    <property type="entry name" value="Ribosomal_uL6_A"/>
    <property type="match status" value="1"/>
</dbReference>
<dbReference type="InterPro" id="IPR000702">
    <property type="entry name" value="Ribosomal_uL6-like"/>
</dbReference>
<dbReference type="InterPro" id="IPR036789">
    <property type="entry name" value="Ribosomal_uL6-like_a/b-dom_sf"/>
</dbReference>
<dbReference type="InterPro" id="IPR020040">
    <property type="entry name" value="Ribosomal_uL6_a/b-dom"/>
</dbReference>
<dbReference type="InterPro" id="IPR019907">
    <property type="entry name" value="Ribosomal_uL6_arc"/>
</dbReference>
<dbReference type="InterPro" id="IPR002359">
    <property type="entry name" value="Ribosomal_uL6_CS2"/>
</dbReference>
<dbReference type="NCBIfam" id="NF004037">
    <property type="entry name" value="PRK05518.1"/>
    <property type="match status" value="1"/>
</dbReference>
<dbReference type="NCBIfam" id="TIGR03653">
    <property type="entry name" value="uL6_arch"/>
    <property type="match status" value="1"/>
</dbReference>
<dbReference type="PANTHER" id="PTHR11655:SF16">
    <property type="entry name" value="60S RIBOSOMAL PROTEIN L9"/>
    <property type="match status" value="1"/>
</dbReference>
<dbReference type="PANTHER" id="PTHR11655">
    <property type="entry name" value="60S/50S RIBOSOMAL PROTEIN L6/L9"/>
    <property type="match status" value="1"/>
</dbReference>
<dbReference type="Pfam" id="PF00347">
    <property type="entry name" value="Ribosomal_L6"/>
    <property type="match status" value="2"/>
</dbReference>
<dbReference type="PIRSF" id="PIRSF002162">
    <property type="entry name" value="Ribosomal_L6"/>
    <property type="match status" value="1"/>
</dbReference>
<dbReference type="SUPFAM" id="SSF56053">
    <property type="entry name" value="Ribosomal protein L6"/>
    <property type="match status" value="2"/>
</dbReference>
<dbReference type="PROSITE" id="PS00700">
    <property type="entry name" value="RIBOSOMAL_L6_2"/>
    <property type="match status" value="1"/>
</dbReference>
<name>RL6_HYPBU</name>
<comment type="function">
    <text evidence="1">This protein binds to the 23S rRNA, and is important in its secondary structure. It is located near the subunit interface in the base of the L7/L12 stalk, and near the tRNA binding site of the peptidyltransferase center.</text>
</comment>
<comment type="subunit">
    <text evidence="1">Part of the 50S ribosomal subunit.</text>
</comment>
<comment type="similarity">
    <text evidence="1">Belongs to the universal ribosomal protein uL6 family.</text>
</comment>
<gene>
    <name evidence="1" type="primary">rpl6</name>
    <name type="ordered locus">Hbut_1316</name>
</gene>
<sequence>MAKAVYVAEEVRVPEGVEVSIDGLKVTVKGPKGELTRDFSHARNIVIRLDEDEEGKKVVVEAYFANRRVKALVGTIAAHIENMITGVTKGFRYKLKIVYSHFPVTVKVQGDKVVIENFLGEKAPRIAKIMPGVTVKVQKDDVIVEGIDIEAVGQTAANIEQATKVKDKDRRVFIDGIYIYEKGVAE</sequence>
<proteinExistence type="inferred from homology"/>
<feature type="chain" id="PRO_1000055241" description="Large ribosomal subunit protein uL6">
    <location>
        <begin position="1"/>
        <end position="186"/>
    </location>
</feature>
<reference key="1">
    <citation type="journal article" date="2007" name="Archaea">
        <title>The genome of Hyperthermus butylicus: a sulfur-reducing, peptide fermenting, neutrophilic Crenarchaeote growing up to 108 degrees C.</title>
        <authorList>
            <person name="Bruegger K."/>
            <person name="Chen L."/>
            <person name="Stark M."/>
            <person name="Zibat A."/>
            <person name="Redder P."/>
            <person name="Ruepp A."/>
            <person name="Awayez M."/>
            <person name="She Q."/>
            <person name="Garrett R.A."/>
            <person name="Klenk H.-P."/>
        </authorList>
    </citation>
    <scope>NUCLEOTIDE SEQUENCE [LARGE SCALE GENOMIC DNA]</scope>
    <source>
        <strain>DSM 5456 / JCM 9403 / PLM1-5</strain>
    </source>
</reference>
<organism>
    <name type="scientific">Hyperthermus butylicus (strain DSM 5456 / JCM 9403 / PLM1-5)</name>
    <dbReference type="NCBI Taxonomy" id="415426"/>
    <lineage>
        <taxon>Archaea</taxon>
        <taxon>Thermoproteota</taxon>
        <taxon>Thermoprotei</taxon>
        <taxon>Desulfurococcales</taxon>
        <taxon>Pyrodictiaceae</taxon>
        <taxon>Hyperthermus</taxon>
    </lineage>
</organism>
<protein>
    <recommendedName>
        <fullName evidence="1">Large ribosomal subunit protein uL6</fullName>
    </recommendedName>
    <alternativeName>
        <fullName evidence="2">50S ribosomal protein L6</fullName>
    </alternativeName>
</protein>
<keyword id="KW-1185">Reference proteome</keyword>
<keyword id="KW-0687">Ribonucleoprotein</keyword>
<keyword id="KW-0689">Ribosomal protein</keyword>
<keyword id="KW-0694">RNA-binding</keyword>
<keyword id="KW-0699">rRNA-binding</keyword>